<evidence type="ECO:0000250" key="1">
    <source>
        <dbReference type="UniProtKB" id="Q15139"/>
    </source>
</evidence>
<evidence type="ECO:0000250" key="2">
    <source>
        <dbReference type="UniProtKB" id="Q62101"/>
    </source>
</evidence>
<evidence type="ECO:0000250" key="3">
    <source>
        <dbReference type="UniProtKB" id="Q8BZ03"/>
    </source>
</evidence>
<evidence type="ECO:0000250" key="4">
    <source>
        <dbReference type="UniProtKB" id="Q8K1Y2"/>
    </source>
</evidence>
<evidence type="ECO:0000250" key="5">
    <source>
        <dbReference type="UniProtKB" id="Q9BZL6"/>
    </source>
</evidence>
<evidence type="ECO:0000255" key="6">
    <source>
        <dbReference type="PROSITE-ProRule" id="PRU00145"/>
    </source>
</evidence>
<evidence type="ECO:0000255" key="7">
    <source>
        <dbReference type="PROSITE-ProRule" id="PRU00159"/>
    </source>
</evidence>
<evidence type="ECO:0000255" key="8">
    <source>
        <dbReference type="PROSITE-ProRule" id="PRU00226"/>
    </source>
</evidence>
<evidence type="ECO:0000255" key="9">
    <source>
        <dbReference type="PROSITE-ProRule" id="PRU10027"/>
    </source>
</evidence>
<evidence type="ECO:0000256" key="10">
    <source>
        <dbReference type="SAM" id="MobiDB-lite"/>
    </source>
</evidence>
<evidence type="ECO:0000269" key="11">
    <source>
    </source>
</evidence>
<evidence type="ECO:0000269" key="12">
    <source>
    </source>
</evidence>
<evidence type="ECO:0000269" key="13">
    <source>
    </source>
</evidence>
<evidence type="ECO:0000269" key="14">
    <source>
    </source>
</evidence>
<evidence type="ECO:0000269" key="15">
    <source>
    </source>
</evidence>
<evidence type="ECO:0000305" key="16"/>
<evidence type="ECO:0007744" key="17">
    <source>
    </source>
</evidence>
<feature type="chain" id="PRO_0000333881" description="Serine/threonine-protein kinase D1">
    <location>
        <begin position="1"/>
        <end position="918"/>
    </location>
</feature>
<feature type="domain" description="PH" evidence="6">
    <location>
        <begin position="428"/>
        <end position="547"/>
    </location>
</feature>
<feature type="domain" description="Protein kinase" evidence="7">
    <location>
        <begin position="589"/>
        <end position="845"/>
    </location>
</feature>
<feature type="zinc finger region" description="Phorbol-ester/DAG-type 1" evidence="8">
    <location>
        <begin position="144"/>
        <end position="194"/>
    </location>
</feature>
<feature type="zinc finger region" description="Phorbol-ester/DAG-type 2" evidence="8">
    <location>
        <begin position="276"/>
        <end position="326"/>
    </location>
</feature>
<feature type="region of interest" description="Disordered" evidence="10">
    <location>
        <begin position="338"/>
        <end position="362"/>
    </location>
</feature>
<feature type="region of interest" description="Disordered" evidence="10">
    <location>
        <begin position="380"/>
        <end position="408"/>
    </location>
</feature>
<feature type="compositionally biased region" description="Acidic residues" evidence="10">
    <location>
        <begin position="345"/>
        <end position="355"/>
    </location>
</feature>
<feature type="compositionally biased region" description="Acidic residues" evidence="10">
    <location>
        <begin position="387"/>
        <end position="396"/>
    </location>
</feature>
<feature type="active site" description="Proton acceptor" evidence="7 9">
    <location>
        <position position="712"/>
    </location>
</feature>
<feature type="binding site" evidence="7">
    <location>
        <begin position="595"/>
        <end position="603"/>
    </location>
    <ligand>
        <name>ATP</name>
        <dbReference type="ChEBI" id="CHEBI:30616"/>
    </ligand>
</feature>
<feature type="binding site" evidence="7">
    <location>
        <position position="618"/>
    </location>
    <ligand>
        <name>ATP</name>
        <dbReference type="ChEBI" id="CHEBI:30616"/>
    </ligand>
</feature>
<feature type="modified residue" description="Phosphotyrosine" evidence="1">
    <location>
        <position position="93"/>
    </location>
</feature>
<feature type="modified residue" description="Phosphoserine" evidence="17">
    <location>
        <position position="203"/>
    </location>
</feature>
<feature type="modified residue" description="Phosphoserine" evidence="17">
    <location>
        <position position="206"/>
    </location>
</feature>
<feature type="modified residue" description="Phosphoserine" evidence="3">
    <location>
        <position position="217"/>
    </location>
</feature>
<feature type="modified residue" description="Phosphoserine" evidence="5">
    <location>
        <position position="221"/>
    </location>
</feature>
<feature type="modified residue" description="Phosphoserine" evidence="1">
    <location>
        <position position="351"/>
    </location>
</feature>
<feature type="modified residue" description="Phosphoserine; by MAPK13" evidence="1">
    <location>
        <position position="403"/>
    </location>
</feature>
<feature type="modified residue" description="Phosphoserine; by MAPK13" evidence="1">
    <location>
        <position position="407"/>
    </location>
</feature>
<feature type="modified residue" description="Phosphotyrosine" evidence="1">
    <location>
        <position position="438"/>
    </location>
</feature>
<feature type="modified residue" description="Phosphoserine" evidence="1">
    <location>
        <position position="454"/>
    </location>
</feature>
<feature type="modified residue" description="Phosphotyrosine; by ABL" evidence="5">
    <location>
        <position position="469"/>
    </location>
</feature>
<feature type="modified residue" description="Phosphotyrosine" evidence="1">
    <location>
        <position position="508"/>
    </location>
</feature>
<feature type="modified residue" description="Phosphoserine" evidence="4">
    <location>
        <position position="554"/>
    </location>
</feature>
<feature type="modified residue" description="Phosphoserine; by PKC/PRKCD" evidence="1">
    <location>
        <position position="744"/>
    </location>
</feature>
<feature type="modified residue" description="Phosphoserine; by autocatalysis and PKC/PRKCD" evidence="1">
    <location>
        <position position="748"/>
    </location>
</feature>
<feature type="modified residue" description="Phosphotyrosine" evidence="5">
    <location>
        <position position="755"/>
    </location>
</feature>
<feature type="modified residue" description="Phosphoserine; by autocatalysis" evidence="12">
    <location>
        <position position="916"/>
    </location>
</feature>
<feature type="sequence conflict" description="In Ref. 2; BAA78373." evidence="16" ref="2">
    <original>V</original>
    <variation>G</variation>
    <location>
        <position position="718"/>
    </location>
</feature>
<keyword id="KW-0037">Angiogenesis</keyword>
<keyword id="KW-0053">Apoptosis</keyword>
<keyword id="KW-0067">ATP-binding</keyword>
<keyword id="KW-1003">Cell membrane</keyword>
<keyword id="KW-0963">Cytoplasm</keyword>
<keyword id="KW-0221">Differentiation</keyword>
<keyword id="KW-0333">Golgi apparatus</keyword>
<keyword id="KW-0391">Immunity</keyword>
<keyword id="KW-0395">Inflammatory response</keyword>
<keyword id="KW-0399">Innate immunity</keyword>
<keyword id="KW-0418">Kinase</keyword>
<keyword id="KW-0460">Magnesium</keyword>
<keyword id="KW-0472">Membrane</keyword>
<keyword id="KW-0479">Metal-binding</keyword>
<keyword id="KW-0524">Neurogenesis</keyword>
<keyword id="KW-0547">Nucleotide-binding</keyword>
<keyword id="KW-0597">Phosphoprotein</keyword>
<keyword id="KW-1185">Reference proteome</keyword>
<keyword id="KW-0677">Repeat</keyword>
<keyword id="KW-0723">Serine/threonine-protein kinase</keyword>
<keyword id="KW-0808">Transferase</keyword>
<keyword id="KW-0862">Zinc</keyword>
<keyword id="KW-0863">Zinc-finger</keyword>
<gene>
    <name type="primary">Prkd1</name>
    <name type="synonym">Pkcm</name>
    <name type="synonym">Pkd</name>
    <name type="synonym">Prkcm</name>
</gene>
<comment type="function">
    <text evidence="1 2 11 13 14 15">Serine/threonine-protein kinase that converts transient diacylglycerol (DAG) signals into prolonged physiological effects downstream of PKC, and is involved in the regulation of MAPK8/JNK1 and Ras signaling, Golgi membrane integrity and trafficking, cell survival through NF-kappa-B activation, cell migration, cell differentiation by mediating HDAC7 nuclear export, cell proliferation via MAPK1/3 (ERK1/2) signaling, and plays a role in cardiac hypertrophy, VEGFA-induced angiogenesis, genotoxic-induced apoptosis and flagellin-stimulated inflammatory response (PubMed:10412981, PubMed:15367659, PubMed:15514163). Phosphorylates the epidermal growth factor receptor (EGFR) on dual threonine residues, which leads to the suppression of epidermal growth factor (EGF)-induced MAPK8/JNK1 activation and subsequent JUN phosphorylation. Phosphorylates RIN1, inducing RIN1 binding to 14-3-3 proteins YWHAB, YWHAE and YWHAZ and increased competition with RAF1 for binding to GTP-bound form of Ras proteins (NRAS, HRAS and KRAS). Acts downstream of the heterotrimeric G-protein beta/gamma-subunit complex to maintain the structural integrity of the Golgi membranes, and is required for protein transport along the secretory pathway. In the trans-Golgi network (TGN), regulates the fission of transport vesicles that are on their way to the plasma membrane. May act by activating the lipid kinase phosphatidylinositol 4-kinase beta (PI4KB) at the TGN for the local synthesis of phosphorylated inositol lipids, which induces a sequential production of DAG, phosphatidic acid (PA) and lyso-PA (LPA) that are necessary for membrane fission and generation of specific transport carriers to the cell surface. Under oxidative stress, is phosphorylated at Tyr-469 via SRC-ABL1 and contributes to cell survival by activating IKK complex and subsequent nuclear translocation and activation of NFKB1. Involved in cell migration by regulating integrin alpha-5/beta-3 recycling and promoting its recruitment in newly forming focal adhesion. In osteoblast differentiation, mediates the bone morphogenetic protein 2 (BMP2)-induced nuclear export of HDAC7, which results in the inhibition of HDAC7 transcriptional repression of RUNX2. In neurons, plays an important role in neuronal polarity by regulating the biogenesis of TGN-derived dendritic vesicles, and is involved in the maintenance of dendritic arborization and Golgi structure in hippocampal cells (PubMed:18784310). May potentiate mitogenesis induced by the neuropeptide bombesin or vasopressin by mediating an increase in the duration of MAPK1/3 (ERK1/2) signaling, which leads to accumulation of immediate-early gene products including FOS that stimulate cell cycle progression. Plays an important role in the proliferative response induced by low calcium in keratinocytes, through sustained activation of MAPK1/3 (ERK1/2) pathway. Downstream of novel PKC signaling, plays a role in cardiac hypertrophy by phosphorylating HDAC5, which in turn triggers XPO1/CRM1-dependent nuclear export of HDAC5, MEF2A transcriptional activation and induction of downstream target genes that promote myocyte hypertrophy and pathological cardiac remodeling (PubMed:15367659). Mediates cardiac troponin I (TNNI3) phosphorylation at the PKA sites, which results in reduced myofilament calcium sensitivity, and accelerated crossbridge cycling kinetics. The PRKD1-HDAC5 pathway is also involved in angiogenesis by mediating VEGFA-induced specific subset of gene expression, cell migration, and tube formation. In response to VEGFA, is necessary and required for HDAC7 phosphorylation which induces HDAC7 nuclear export and endothelial cell proliferation and migration. During apoptosis induced by cytarabine and other genotoxic agents, PRKD1 is cleaved by caspase-3 at Asp-378, resulting in activation of its kinase function and increased sensitivity of cells to the cytotoxic effects of genotoxic agents. In epithelial cells, is required for transducing flagellin-stimulated inflammatory responses by binding and phosphorylating TLR5, which contributes to MAPK14/p38 activation and production of inflammatory cytokines. Acts as an activator of NLRP3 inflammasome assembly by mediating phosphorylation of NLRP3 (By similarity). May play a role in inflammatory response by mediating activation of NF-kappa-B. May be involved in pain transmission by directly modulating TRPV1 receptor. Plays a role in activated KRAS-mediated stabilization of ZNF304 in colorectal cancer (CRC) cells (By similarity). Regulates nuclear translocation of transcription factor TFEB in macrophages upon live S.enterica infection (By similarity).</text>
</comment>
<comment type="catalytic activity">
    <reaction>
        <text>L-seryl-[protein] + ATP = O-phospho-L-seryl-[protein] + ADP + H(+)</text>
        <dbReference type="Rhea" id="RHEA:17989"/>
        <dbReference type="Rhea" id="RHEA-COMP:9863"/>
        <dbReference type="Rhea" id="RHEA-COMP:11604"/>
        <dbReference type="ChEBI" id="CHEBI:15378"/>
        <dbReference type="ChEBI" id="CHEBI:29999"/>
        <dbReference type="ChEBI" id="CHEBI:30616"/>
        <dbReference type="ChEBI" id="CHEBI:83421"/>
        <dbReference type="ChEBI" id="CHEBI:456216"/>
        <dbReference type="EC" id="2.7.11.13"/>
    </reaction>
</comment>
<comment type="catalytic activity">
    <reaction>
        <text>L-threonyl-[protein] + ATP = O-phospho-L-threonyl-[protein] + ADP + H(+)</text>
        <dbReference type="Rhea" id="RHEA:46608"/>
        <dbReference type="Rhea" id="RHEA-COMP:11060"/>
        <dbReference type="Rhea" id="RHEA-COMP:11605"/>
        <dbReference type="ChEBI" id="CHEBI:15378"/>
        <dbReference type="ChEBI" id="CHEBI:30013"/>
        <dbReference type="ChEBI" id="CHEBI:30616"/>
        <dbReference type="ChEBI" id="CHEBI:61977"/>
        <dbReference type="ChEBI" id="CHEBI:456216"/>
        <dbReference type="EC" id="2.7.11.13"/>
    </reaction>
</comment>
<comment type="cofactor">
    <cofactor evidence="16">
        <name>Mg(2+)</name>
        <dbReference type="ChEBI" id="CHEBI:18420"/>
    </cofactor>
</comment>
<comment type="activity regulation">
    <text evidence="1">Activated by DAG and phorbol esters. Phorbol-ester/DAG-type domain 1 binds DAG with high affinity and appears to play the dominant role in mediating translocation to the cell membrane and trans-Golgi network. Phorbol-ester/DAG-type domain 2 binds phorbol ester with higher affinity. Autophosphorylation of Ser-748 and phosphorylation of Ser-744 by PKC relieves auto-inhibition by the PH domain. Phosphorylation on Tyr-469 by the SRC-ABL1 pathway in response to oxidative stress, is also required for activation. Activated by DAPK1 under oxidative stress (By similarity).</text>
</comment>
<comment type="subunit">
    <text evidence="1 2">Interacts (via N-terminus) with ADAP1/CENTA1. Interacts with MAPK13. Interacts with DAPK1 in an oxidative stress-regulated manner. Interacts with USP28; the interaction induces phosphorylation of USP28 and activated KRAS-mediated stabilization of ZNF304 (By similarity). Interacts with AKAP13 (via C-terminal domain) (By similarity).</text>
</comment>
<comment type="subcellular location">
    <subcellularLocation>
        <location evidence="1">Cytoplasm</location>
    </subcellularLocation>
    <subcellularLocation>
        <location evidence="1">Cell membrane</location>
    </subcellularLocation>
    <subcellularLocation>
        <location evidence="2">Golgi apparatus</location>
        <location evidence="2">trans-Golgi network</location>
    </subcellularLocation>
    <text evidence="1">Translocation to the cell membrane is required for kinase activation.</text>
</comment>
<comment type="PTM">
    <text evidence="1 2">Phosphorylated at Ser-403 and Ser-407 by MAPK13 during regulation of insulin secretion in pancreatic beta cells. Phosphorylated by DAPK1. Phosphorylated at Tyr-93 and by ABL at Tyr-469, which primes the kinase in response to oxidative stress, and promotes a second step activating phosphorylation at Ser-744/Ser-748 by PKRD. Phosphorylated on Ser-916 upon S.enterica infection in macrophages.</text>
</comment>
<comment type="similarity">
    <text evidence="16">Belongs to the protein kinase superfamily. CAMK Ser/Thr protein kinase family. PKD subfamily.</text>
</comment>
<organism>
    <name type="scientific">Rattus norvegicus</name>
    <name type="common">Rat</name>
    <dbReference type="NCBI Taxonomy" id="10116"/>
    <lineage>
        <taxon>Eukaryota</taxon>
        <taxon>Metazoa</taxon>
        <taxon>Chordata</taxon>
        <taxon>Craniata</taxon>
        <taxon>Vertebrata</taxon>
        <taxon>Euteleostomi</taxon>
        <taxon>Mammalia</taxon>
        <taxon>Eutheria</taxon>
        <taxon>Euarchontoglires</taxon>
        <taxon>Glires</taxon>
        <taxon>Rodentia</taxon>
        <taxon>Myomorpha</taxon>
        <taxon>Muroidea</taxon>
        <taxon>Muridae</taxon>
        <taxon>Murinae</taxon>
        <taxon>Rattus</taxon>
    </lineage>
</organism>
<accession>Q9WTQ1</accession>
<proteinExistence type="evidence at protein level"/>
<reference key="1">
    <citation type="journal article" date="2004" name="Nature">
        <title>Genome sequence of the Brown Norway rat yields insights into mammalian evolution.</title>
        <authorList>
            <person name="Gibbs R.A."/>
            <person name="Weinstock G.M."/>
            <person name="Metzker M.L."/>
            <person name="Muzny D.M."/>
            <person name="Sodergren E.J."/>
            <person name="Scherer S."/>
            <person name="Scott G."/>
            <person name="Steffen D."/>
            <person name="Worley K.C."/>
            <person name="Burch P.E."/>
            <person name="Okwuonu G."/>
            <person name="Hines S."/>
            <person name="Lewis L."/>
            <person name="Deramo C."/>
            <person name="Delgado O."/>
            <person name="Dugan-Rocha S."/>
            <person name="Miner G."/>
            <person name="Morgan M."/>
            <person name="Hawes A."/>
            <person name="Gill R."/>
            <person name="Holt R.A."/>
            <person name="Adams M.D."/>
            <person name="Amanatides P.G."/>
            <person name="Baden-Tillson H."/>
            <person name="Barnstead M."/>
            <person name="Chin S."/>
            <person name="Evans C.A."/>
            <person name="Ferriera S."/>
            <person name="Fosler C."/>
            <person name="Glodek A."/>
            <person name="Gu Z."/>
            <person name="Jennings D."/>
            <person name="Kraft C.L."/>
            <person name="Nguyen T."/>
            <person name="Pfannkoch C.M."/>
            <person name="Sitter C."/>
            <person name="Sutton G.G."/>
            <person name="Venter J.C."/>
            <person name="Woodage T."/>
            <person name="Smith D."/>
            <person name="Lee H.-M."/>
            <person name="Gustafson E."/>
            <person name="Cahill P."/>
            <person name="Kana A."/>
            <person name="Doucette-Stamm L."/>
            <person name="Weinstock K."/>
            <person name="Fechtel K."/>
            <person name="Weiss R.B."/>
            <person name="Dunn D.M."/>
            <person name="Green E.D."/>
            <person name="Blakesley R.W."/>
            <person name="Bouffard G.G."/>
            <person name="De Jong P.J."/>
            <person name="Osoegawa K."/>
            <person name="Zhu B."/>
            <person name="Marra M."/>
            <person name="Schein J."/>
            <person name="Bosdet I."/>
            <person name="Fjell C."/>
            <person name="Jones S."/>
            <person name="Krzywinski M."/>
            <person name="Mathewson C."/>
            <person name="Siddiqui A."/>
            <person name="Wye N."/>
            <person name="McPherson J."/>
            <person name="Zhao S."/>
            <person name="Fraser C.M."/>
            <person name="Shetty J."/>
            <person name="Shatsman S."/>
            <person name="Geer K."/>
            <person name="Chen Y."/>
            <person name="Abramzon S."/>
            <person name="Nierman W.C."/>
            <person name="Havlak P.H."/>
            <person name="Chen R."/>
            <person name="Durbin K.J."/>
            <person name="Egan A."/>
            <person name="Ren Y."/>
            <person name="Song X.-Z."/>
            <person name="Li B."/>
            <person name="Liu Y."/>
            <person name="Qin X."/>
            <person name="Cawley S."/>
            <person name="Cooney A.J."/>
            <person name="D'Souza L.M."/>
            <person name="Martin K."/>
            <person name="Wu J.Q."/>
            <person name="Gonzalez-Garay M.L."/>
            <person name="Jackson A.R."/>
            <person name="Kalafus K.J."/>
            <person name="McLeod M.P."/>
            <person name="Milosavljevic A."/>
            <person name="Virk D."/>
            <person name="Volkov A."/>
            <person name="Wheeler D.A."/>
            <person name="Zhang Z."/>
            <person name="Bailey J.A."/>
            <person name="Eichler E.E."/>
            <person name="Tuzun E."/>
            <person name="Birney E."/>
            <person name="Mongin E."/>
            <person name="Ureta-Vidal A."/>
            <person name="Woodwark C."/>
            <person name="Zdobnov E."/>
            <person name="Bork P."/>
            <person name="Suyama M."/>
            <person name="Torrents D."/>
            <person name="Alexandersson M."/>
            <person name="Trask B.J."/>
            <person name="Young J.M."/>
            <person name="Huang H."/>
            <person name="Wang H."/>
            <person name="Xing H."/>
            <person name="Daniels S."/>
            <person name="Gietzen D."/>
            <person name="Schmidt J."/>
            <person name="Stevens K."/>
            <person name="Vitt U."/>
            <person name="Wingrove J."/>
            <person name="Camara F."/>
            <person name="Mar Alba M."/>
            <person name="Abril J.F."/>
            <person name="Guigo R."/>
            <person name="Smit A."/>
            <person name="Dubchak I."/>
            <person name="Rubin E.M."/>
            <person name="Couronne O."/>
            <person name="Poliakov A."/>
            <person name="Huebner N."/>
            <person name="Ganten D."/>
            <person name="Goesele C."/>
            <person name="Hummel O."/>
            <person name="Kreitler T."/>
            <person name="Lee Y.-A."/>
            <person name="Monti J."/>
            <person name="Schulz H."/>
            <person name="Zimdahl H."/>
            <person name="Himmelbauer H."/>
            <person name="Lehrach H."/>
            <person name="Jacob H.J."/>
            <person name="Bromberg S."/>
            <person name="Gullings-Handley J."/>
            <person name="Jensen-Seaman M.I."/>
            <person name="Kwitek A.E."/>
            <person name="Lazar J."/>
            <person name="Pasko D."/>
            <person name="Tonellato P.J."/>
            <person name="Twigger S."/>
            <person name="Ponting C.P."/>
            <person name="Duarte J.M."/>
            <person name="Rice S."/>
            <person name="Goodstadt L."/>
            <person name="Beatson S.A."/>
            <person name="Emes R.D."/>
            <person name="Winter E.E."/>
            <person name="Webber C."/>
            <person name="Brandt P."/>
            <person name="Nyakatura G."/>
            <person name="Adetobi M."/>
            <person name="Chiaromonte F."/>
            <person name="Elnitski L."/>
            <person name="Eswara P."/>
            <person name="Hardison R.C."/>
            <person name="Hou M."/>
            <person name="Kolbe D."/>
            <person name="Makova K."/>
            <person name="Miller W."/>
            <person name="Nekrutenko A."/>
            <person name="Riemer C."/>
            <person name="Schwartz S."/>
            <person name="Taylor J."/>
            <person name="Yang S."/>
            <person name="Zhang Y."/>
            <person name="Lindpaintner K."/>
            <person name="Andrews T.D."/>
            <person name="Caccamo M."/>
            <person name="Clamp M."/>
            <person name="Clarke L."/>
            <person name="Curwen V."/>
            <person name="Durbin R.M."/>
            <person name="Eyras E."/>
            <person name="Searle S.M."/>
            <person name="Cooper G.M."/>
            <person name="Batzoglou S."/>
            <person name="Brudno M."/>
            <person name="Sidow A."/>
            <person name="Stone E.A."/>
            <person name="Payseur B.A."/>
            <person name="Bourque G."/>
            <person name="Lopez-Otin C."/>
            <person name="Puente X.S."/>
            <person name="Chakrabarti K."/>
            <person name="Chatterji S."/>
            <person name="Dewey C."/>
            <person name="Pachter L."/>
            <person name="Bray N."/>
            <person name="Yap V.B."/>
            <person name="Caspi A."/>
            <person name="Tesler G."/>
            <person name="Pevzner P.A."/>
            <person name="Haussler D."/>
            <person name="Roskin K.M."/>
            <person name="Baertsch R."/>
            <person name="Clawson H."/>
            <person name="Furey T.S."/>
            <person name="Hinrichs A.S."/>
            <person name="Karolchik D."/>
            <person name="Kent W.J."/>
            <person name="Rosenbloom K.R."/>
            <person name="Trumbower H."/>
            <person name="Weirauch M."/>
            <person name="Cooper D.N."/>
            <person name="Stenson P.D."/>
            <person name="Ma B."/>
            <person name="Brent M."/>
            <person name="Arumugam M."/>
            <person name="Shteynberg D."/>
            <person name="Copley R.R."/>
            <person name="Taylor M.S."/>
            <person name="Riethman H."/>
            <person name="Mudunuri U."/>
            <person name="Peterson J."/>
            <person name="Guyer M."/>
            <person name="Felsenfeld A."/>
            <person name="Old S."/>
            <person name="Mockrin S."/>
            <person name="Collins F.S."/>
        </authorList>
    </citation>
    <scope>NUCLEOTIDE SEQUENCE [LARGE SCALE GENOMIC DNA]</scope>
    <source>
        <strain>Brown Norway</strain>
    </source>
</reference>
<reference key="2">
    <citation type="submission" date="1998-12" db="EMBL/GenBank/DDBJ databases">
        <title>Rat PKC mu mRNA partial cds.</title>
        <authorList>
            <person name="Minami H."/>
            <person name="Owada Y."/>
            <person name="Kondo H."/>
        </authorList>
    </citation>
    <scope>NUCLEOTIDE SEQUENCE [MRNA] OF 718-864</scope>
    <source>
        <strain>Wistar</strain>
        <tissue>Brain</tissue>
    </source>
</reference>
<reference key="3">
    <citation type="journal article" date="1999" name="Cell">
        <title>Gbetagamma-mediated regulation of Golgi organization is through the direct activation of protein kinase D.</title>
        <authorList>
            <person name="Jamora C."/>
            <person name="Yamanouye N."/>
            <person name="Van Lint J."/>
            <person name="Laudenslager J."/>
            <person name="Vandenheede J.R."/>
            <person name="Faulkner D.J."/>
            <person name="Malhotra V."/>
        </authorList>
    </citation>
    <scope>FUNCTION IN GOLGI REGULATION</scope>
</reference>
<reference key="4">
    <citation type="journal article" date="2004" name="Circ. Res.">
        <title>Protein kinase D is a novel mediator of cardiac troponin I phosphorylation and regulates myofilament function.</title>
        <authorList>
            <person name="Haworth R.S."/>
            <person name="Cuello F."/>
            <person name="Herron T.J."/>
            <person name="Franzen G."/>
            <person name="Kentish J.C."/>
            <person name="Gautel M."/>
            <person name="Avkiran M."/>
        </authorList>
    </citation>
    <scope>FUNCTION IN CARDIOMYOCYTE</scope>
</reference>
<reference key="5">
    <citation type="journal article" date="2004" name="J. Biol. Chem.">
        <title>Hepatocyte resistance to oxidative stress is dependent on protein kinase C-mediated down-regulation of c-Jun/AP-1.</title>
        <authorList>
            <person name="Wang Y."/>
            <person name="Schattenberg J.M."/>
            <person name="Rigoli R.M."/>
            <person name="Storz P."/>
            <person name="Czaja M.J."/>
        </authorList>
    </citation>
    <scope>PHOSPHORYLATION AT SER-744; SER-748 AND SER-916</scope>
</reference>
<reference key="6">
    <citation type="journal article" date="2004" name="Mol. Cell. Biol.">
        <title>Protein kinases C and D mediate agonist-dependent cardiac hypertrophy through nuclear export of histone deacetylase 5.</title>
        <authorList>
            <person name="Vega R.B."/>
            <person name="Harrison B.C."/>
            <person name="Meadows E."/>
            <person name="Roberts C.R."/>
            <person name="Papst P.J."/>
            <person name="Olson E.N."/>
            <person name="McKinsey T.A."/>
        </authorList>
    </citation>
    <scope>FUNCTION IN CARDIAC HYPERTROPHY</scope>
</reference>
<reference key="7">
    <citation type="journal article" date="2008" name="J. Neurosci.">
        <title>Protein kinase d regulates trafficking of dendritic membrane proteins in developing neurons.</title>
        <authorList>
            <person name="Bisbal M."/>
            <person name="Conde C."/>
            <person name="Donoso M."/>
            <person name="Bollati F."/>
            <person name="Sesma J."/>
            <person name="Quiroga S."/>
            <person name="Diaz Anel A."/>
            <person name="Malhotra V."/>
            <person name="Marzolo M.P."/>
            <person name="Caceres A."/>
        </authorList>
    </citation>
    <scope>FUNCTION IN NEURONAL POLARITY</scope>
</reference>
<reference key="8">
    <citation type="journal article" date="2012" name="Nat. Commun.">
        <title>Quantitative maps of protein phosphorylation sites across 14 different rat organs and tissues.</title>
        <authorList>
            <person name="Lundby A."/>
            <person name="Secher A."/>
            <person name="Lage K."/>
            <person name="Nordsborg N.B."/>
            <person name="Dmytriyev A."/>
            <person name="Lundby C."/>
            <person name="Olsen J.V."/>
        </authorList>
    </citation>
    <scope>PHOSPHORYLATION [LARGE SCALE ANALYSIS] AT SER-203 AND SER-206</scope>
    <scope>IDENTIFICATION BY MASS SPECTROMETRY [LARGE SCALE ANALYSIS]</scope>
</reference>
<name>KPCD1_RAT</name>
<protein>
    <recommendedName>
        <fullName>Serine/threonine-protein kinase D1</fullName>
        <ecNumber>2.7.11.13</ecNumber>
    </recommendedName>
    <alternativeName>
        <fullName>Protein kinase C mu type</fullName>
    </alternativeName>
    <alternativeName>
        <fullName>Protein kinase D</fullName>
    </alternativeName>
    <alternativeName>
        <fullName>nPKC-D1</fullName>
    </alternativeName>
    <alternativeName>
        <fullName>nPKC-mu</fullName>
    </alternativeName>
</protein>
<sequence>MSAPPLLRPPSPLLPAAAAVAAAAAALVPGSGPAPFPAPGAAPAGGISFHLQIGLSREPVLLLQDSSGDYSLAHVREMACSIVDQKFPECGFYGLYDKILLFRHDPASENILQLVKIASDIQEGDLIEVVLSASATFEDFQIRPHALFVHSYRAPAFCDHCGEMLWGLVRQGLKCEGCGLNYHKRCAFKIPNNCSGVRRRRLSNVSLTGLGTVRTASAEFSTSAPDEPLLSPVSPGFEQKSPSESFIGREKRSNSQSYVGRPIQLDKLLMSKVKVPHTFVIHSYTRPTVCQFCKKLLKGLFRQGLQCKDCRFNCHKRCAPKVPNNCLGEVTINGELLSPGAESDVVMEEGSDDNDSERNSGLMDDMDEAMVQDTEMALAEGQSDGAEMQDPDADQEDSNRTISPSTSNNIPLMRVVQSVKHTKRRSSTVMKEGWMVHYTSKDTLRKRHYWRLDSKSITLFQNDTGSRYYKEIPLSEILCLEPAKPSALIPTGANPHCFEITTANVVYYVGENVVNPSSPPPNNSVPPSGIGTDVARMWEVAIQHALMPVIPKGSSVGSGTNSHKDISVSISVSNSQIQENVDISTVYQIFPDEVLGSGQFGIVYGGKHRKTGRDVAIKIIDKLRFPTKQESQLRNEVAILQNLHHPGVVNLECMFETPERVFVVMEKLHGDMLEMILSSEKGRLPEHITKFLITQILVALRHLHFKNIVHCDLKPENVLLASADPFPQVKLCDFGFARIIGEKSFRRSVVGTPAYLAPEVLRNKGYNRSLDMWSVGVIIYVSLSGTFPFNEDEDIHDQIQNAAFMYPPNPWKEISHEAIDLINNLLQVKMRKRYSVDKTLSHPWLQDYQTWLDLRELECRIGERYITHESDDSRWEQYAGEQGLQYPAHLINLSASHGDSPEAEEREMKALSERVSIL</sequence>
<dbReference type="EC" id="2.7.11.13"/>
<dbReference type="EMBL" id="AABR03048549">
    <property type="status" value="NOT_ANNOTATED_CDS"/>
    <property type="molecule type" value="Genomic_DNA"/>
</dbReference>
<dbReference type="EMBL" id="AABR03048623">
    <property type="status" value="NOT_ANNOTATED_CDS"/>
    <property type="molecule type" value="Genomic_DNA"/>
</dbReference>
<dbReference type="EMBL" id="AABR03048825">
    <property type="status" value="NOT_ANNOTATED_CDS"/>
    <property type="molecule type" value="Genomic_DNA"/>
</dbReference>
<dbReference type="EMBL" id="AABR03049215">
    <property type="status" value="NOT_ANNOTATED_CDS"/>
    <property type="molecule type" value="Genomic_DNA"/>
</dbReference>
<dbReference type="EMBL" id="AABR03049278">
    <property type="status" value="NOT_ANNOTATED_CDS"/>
    <property type="molecule type" value="Genomic_DNA"/>
</dbReference>
<dbReference type="EMBL" id="AABR03050321">
    <property type="status" value="NOT_ANNOTATED_CDS"/>
    <property type="molecule type" value="Genomic_DNA"/>
</dbReference>
<dbReference type="EMBL" id="AABR03052344">
    <property type="status" value="NOT_ANNOTATED_CDS"/>
    <property type="molecule type" value="Genomic_DNA"/>
</dbReference>
<dbReference type="EMBL" id="AB020616">
    <property type="protein sequence ID" value="BAA78373.1"/>
    <property type="molecule type" value="mRNA"/>
</dbReference>
<dbReference type="RefSeq" id="NP_001263644.1">
    <property type="nucleotide sequence ID" value="NM_001276715.2"/>
</dbReference>
<dbReference type="SMR" id="Q9WTQ1"/>
<dbReference type="BioGRID" id="250093">
    <property type="interactions" value="4"/>
</dbReference>
<dbReference type="FunCoup" id="Q9WTQ1">
    <property type="interactions" value="1424"/>
</dbReference>
<dbReference type="IntAct" id="Q9WTQ1">
    <property type="interactions" value="1"/>
</dbReference>
<dbReference type="STRING" id="10116.ENSRNOP00000063159"/>
<dbReference type="iPTMnet" id="Q9WTQ1"/>
<dbReference type="PhosphoSitePlus" id="Q9WTQ1"/>
<dbReference type="PaxDb" id="10116-ENSRNOP00000063159"/>
<dbReference type="Ensembl" id="ENSRNOT00000068077.3">
    <property type="protein sequence ID" value="ENSRNOP00000063159.2"/>
    <property type="gene ID" value="ENSRNOG00000004165.8"/>
</dbReference>
<dbReference type="GeneID" id="85421"/>
<dbReference type="KEGG" id="rno:85421"/>
<dbReference type="UCSC" id="RGD:620964">
    <property type="organism name" value="rat"/>
</dbReference>
<dbReference type="AGR" id="RGD:620964"/>
<dbReference type="CTD" id="5587"/>
<dbReference type="RGD" id="620964">
    <property type="gene designation" value="Prkd1"/>
</dbReference>
<dbReference type="eggNOG" id="KOG4236">
    <property type="taxonomic scope" value="Eukaryota"/>
</dbReference>
<dbReference type="GeneTree" id="ENSGT00950000183024"/>
<dbReference type="InParanoid" id="Q9WTQ1"/>
<dbReference type="OMA" id="VARRWEM"/>
<dbReference type="OrthoDB" id="74314at2759"/>
<dbReference type="PhylomeDB" id="Q9WTQ1"/>
<dbReference type="PRO" id="PR:Q9WTQ1"/>
<dbReference type="Proteomes" id="UP000002494">
    <property type="component" value="Chromosome 6"/>
</dbReference>
<dbReference type="Bgee" id="ENSRNOG00000004165">
    <property type="expression patterns" value="Expressed in pancreas and 18 other cell types or tissues"/>
</dbReference>
<dbReference type="ExpressionAtlas" id="Q9WTQ1">
    <property type="expression patterns" value="baseline and differential"/>
</dbReference>
<dbReference type="GO" id="GO:0000421">
    <property type="term" value="C:autophagosome membrane"/>
    <property type="evidence" value="ECO:0000266"/>
    <property type="project" value="RGD"/>
</dbReference>
<dbReference type="GO" id="GO:0005938">
    <property type="term" value="C:cell cortex"/>
    <property type="evidence" value="ECO:0000266"/>
    <property type="project" value="RGD"/>
</dbReference>
<dbReference type="GO" id="GO:0005911">
    <property type="term" value="C:cell-cell junction"/>
    <property type="evidence" value="ECO:0000266"/>
    <property type="project" value="RGD"/>
</dbReference>
<dbReference type="GO" id="GO:0005737">
    <property type="term" value="C:cytoplasm"/>
    <property type="evidence" value="ECO:0000314"/>
    <property type="project" value="RGD"/>
</dbReference>
<dbReference type="GO" id="GO:0005829">
    <property type="term" value="C:cytosol"/>
    <property type="evidence" value="ECO:0000250"/>
    <property type="project" value="UniProtKB"/>
</dbReference>
<dbReference type="GO" id="GO:0005794">
    <property type="term" value="C:Golgi apparatus"/>
    <property type="evidence" value="ECO:0000266"/>
    <property type="project" value="RGD"/>
</dbReference>
<dbReference type="GO" id="GO:0016020">
    <property type="term" value="C:membrane"/>
    <property type="evidence" value="ECO:0000314"/>
    <property type="project" value="RGD"/>
</dbReference>
<dbReference type="GO" id="GO:0005634">
    <property type="term" value="C:nucleus"/>
    <property type="evidence" value="ECO:0000314"/>
    <property type="project" value="RGD"/>
</dbReference>
<dbReference type="GO" id="GO:0048471">
    <property type="term" value="C:perinuclear region of cytoplasm"/>
    <property type="evidence" value="ECO:0000314"/>
    <property type="project" value="RGD"/>
</dbReference>
<dbReference type="GO" id="GO:0005886">
    <property type="term" value="C:plasma membrane"/>
    <property type="evidence" value="ECO:0000250"/>
    <property type="project" value="UniProtKB"/>
</dbReference>
<dbReference type="GO" id="GO:0005802">
    <property type="term" value="C:trans-Golgi network"/>
    <property type="evidence" value="ECO:0000250"/>
    <property type="project" value="UniProtKB"/>
</dbReference>
<dbReference type="GO" id="GO:0030018">
    <property type="term" value="C:Z disc"/>
    <property type="evidence" value="ECO:0000314"/>
    <property type="project" value="RGD"/>
</dbReference>
<dbReference type="GO" id="GO:0005524">
    <property type="term" value="F:ATP binding"/>
    <property type="evidence" value="ECO:0007669"/>
    <property type="project" value="UniProtKB-KW"/>
</dbReference>
<dbReference type="GO" id="GO:0004697">
    <property type="term" value="F:diacylglycerol-dependent serine/threonine kinase activity"/>
    <property type="evidence" value="ECO:0000266"/>
    <property type="project" value="RGD"/>
</dbReference>
<dbReference type="GO" id="GO:0031072">
    <property type="term" value="F:heat shock protein binding"/>
    <property type="evidence" value="ECO:0000353"/>
    <property type="project" value="RGD"/>
</dbReference>
<dbReference type="GO" id="GO:0042802">
    <property type="term" value="F:identical protein binding"/>
    <property type="evidence" value="ECO:0000266"/>
    <property type="project" value="RGD"/>
</dbReference>
<dbReference type="GO" id="GO:0016301">
    <property type="term" value="F:kinase activity"/>
    <property type="evidence" value="ECO:0000266"/>
    <property type="project" value="RGD"/>
</dbReference>
<dbReference type="GO" id="GO:0141038">
    <property type="term" value="F:phosphatidylinositol 3-kinase activator activity"/>
    <property type="evidence" value="ECO:0000266"/>
    <property type="project" value="RGD"/>
</dbReference>
<dbReference type="GO" id="GO:0004672">
    <property type="term" value="F:protein kinase activity"/>
    <property type="evidence" value="ECO:0000314"/>
    <property type="project" value="RGD"/>
</dbReference>
<dbReference type="GO" id="GO:0005080">
    <property type="term" value="F:protein kinase C binding"/>
    <property type="evidence" value="ECO:0000353"/>
    <property type="project" value="RGD"/>
</dbReference>
<dbReference type="GO" id="GO:0106310">
    <property type="term" value="F:protein serine kinase activity"/>
    <property type="evidence" value="ECO:0000266"/>
    <property type="project" value="RGD"/>
</dbReference>
<dbReference type="GO" id="GO:0004674">
    <property type="term" value="F:protein serine/threonine kinase activity"/>
    <property type="evidence" value="ECO:0000314"/>
    <property type="project" value="RGD"/>
</dbReference>
<dbReference type="GO" id="GO:0008270">
    <property type="term" value="F:zinc ion binding"/>
    <property type="evidence" value="ECO:0007669"/>
    <property type="project" value="UniProtKB-KW"/>
</dbReference>
<dbReference type="GO" id="GO:0001525">
    <property type="term" value="P:angiogenesis"/>
    <property type="evidence" value="ECO:0007669"/>
    <property type="project" value="UniProtKB-KW"/>
</dbReference>
<dbReference type="GO" id="GO:0006915">
    <property type="term" value="P:apoptotic process"/>
    <property type="evidence" value="ECO:0007669"/>
    <property type="project" value="UniProtKB-KW"/>
</dbReference>
<dbReference type="GO" id="GO:0030154">
    <property type="term" value="P:cell differentiation"/>
    <property type="evidence" value="ECO:0007669"/>
    <property type="project" value="UniProtKB-KW"/>
</dbReference>
<dbReference type="GO" id="GO:0034198">
    <property type="term" value="P:cellular response to amino acid starvation"/>
    <property type="evidence" value="ECO:0000266"/>
    <property type="project" value="RGD"/>
</dbReference>
<dbReference type="GO" id="GO:1904385">
    <property type="term" value="P:cellular response to angiotensin"/>
    <property type="evidence" value="ECO:0000314"/>
    <property type="project" value="RGD"/>
</dbReference>
<dbReference type="GO" id="GO:1990859">
    <property type="term" value="P:cellular response to endothelin"/>
    <property type="evidence" value="ECO:0000314"/>
    <property type="project" value="RGD"/>
</dbReference>
<dbReference type="GO" id="GO:0071447">
    <property type="term" value="P:cellular response to hydroperoxide"/>
    <property type="evidence" value="ECO:0000266"/>
    <property type="project" value="RGD"/>
</dbReference>
<dbReference type="GO" id="GO:0071874">
    <property type="term" value="P:cellular response to norepinephrine stimulus"/>
    <property type="evidence" value="ECO:0000314"/>
    <property type="project" value="RGD"/>
</dbReference>
<dbReference type="GO" id="GO:0034599">
    <property type="term" value="P:cellular response to oxidative stress"/>
    <property type="evidence" value="ECO:0000250"/>
    <property type="project" value="UniProtKB"/>
</dbReference>
<dbReference type="GO" id="GO:1904628">
    <property type="term" value="P:cellular response to phorbol 13-acetate 12-myristate"/>
    <property type="evidence" value="ECO:0000314"/>
    <property type="project" value="RGD"/>
</dbReference>
<dbReference type="GO" id="GO:0035924">
    <property type="term" value="P:cellular response to vascular endothelial growth factor stimulus"/>
    <property type="evidence" value="ECO:0000250"/>
    <property type="project" value="UniProtKB"/>
</dbReference>
<dbReference type="GO" id="GO:0050829">
    <property type="term" value="P:defense response to Gram-negative bacterium"/>
    <property type="evidence" value="ECO:0000266"/>
    <property type="project" value="RGD"/>
</dbReference>
<dbReference type="GO" id="GO:0007030">
    <property type="term" value="P:Golgi organization"/>
    <property type="evidence" value="ECO:0000250"/>
    <property type="project" value="UniProtKB"/>
</dbReference>
<dbReference type="GO" id="GO:0048193">
    <property type="term" value="P:Golgi vesicle transport"/>
    <property type="evidence" value="ECO:0000250"/>
    <property type="project" value="UniProtKB"/>
</dbReference>
<dbReference type="GO" id="GO:0006954">
    <property type="term" value="P:inflammatory response"/>
    <property type="evidence" value="ECO:0007669"/>
    <property type="project" value="UniProtKB-KW"/>
</dbReference>
<dbReference type="GO" id="GO:0045087">
    <property type="term" value="P:innate immune response"/>
    <property type="evidence" value="ECO:0007669"/>
    <property type="project" value="UniProtKB-KW"/>
</dbReference>
<dbReference type="GO" id="GO:0035556">
    <property type="term" value="P:intracellular signal transduction"/>
    <property type="evidence" value="ECO:0000314"/>
    <property type="project" value="RGD"/>
</dbReference>
<dbReference type="GO" id="GO:0007399">
    <property type="term" value="P:nervous system development"/>
    <property type="evidence" value="ECO:0007669"/>
    <property type="project" value="UniProtKB-KW"/>
</dbReference>
<dbReference type="GO" id="GO:0007200">
    <property type="term" value="P:phospholipase C-activating G protein-coupled receptor signaling pathway"/>
    <property type="evidence" value="ECO:0000318"/>
    <property type="project" value="GO_Central"/>
</dbReference>
<dbReference type="GO" id="GO:0045766">
    <property type="term" value="P:positive regulation of angiogenesis"/>
    <property type="evidence" value="ECO:0000250"/>
    <property type="project" value="UniProtKB"/>
</dbReference>
<dbReference type="GO" id="GO:0010508">
    <property type="term" value="P:positive regulation of autophagy"/>
    <property type="evidence" value="ECO:0000266"/>
    <property type="project" value="RGD"/>
</dbReference>
<dbReference type="GO" id="GO:0043536">
    <property type="term" value="P:positive regulation of blood vessel endothelial cell migration"/>
    <property type="evidence" value="ECO:0000266"/>
    <property type="project" value="RGD"/>
</dbReference>
<dbReference type="GO" id="GO:0043123">
    <property type="term" value="P:positive regulation of canonical NF-kappaB signal transduction"/>
    <property type="evidence" value="ECO:0000250"/>
    <property type="project" value="UniProtKB"/>
</dbReference>
<dbReference type="GO" id="GO:0045793">
    <property type="term" value="P:positive regulation of cell size"/>
    <property type="evidence" value="ECO:0000315"/>
    <property type="project" value="RGD"/>
</dbReference>
<dbReference type="GO" id="GO:2001028">
    <property type="term" value="P:positive regulation of endothelial cell chemotaxis"/>
    <property type="evidence" value="ECO:0000266"/>
    <property type="project" value="RGD"/>
</dbReference>
<dbReference type="GO" id="GO:0010595">
    <property type="term" value="P:positive regulation of endothelial cell migration"/>
    <property type="evidence" value="ECO:0000250"/>
    <property type="project" value="UniProtKB"/>
</dbReference>
<dbReference type="GO" id="GO:0001938">
    <property type="term" value="P:positive regulation of endothelial cell proliferation"/>
    <property type="evidence" value="ECO:0000266"/>
    <property type="project" value="RGD"/>
</dbReference>
<dbReference type="GO" id="GO:0010628">
    <property type="term" value="P:positive regulation of gene expression"/>
    <property type="evidence" value="ECO:0000315"/>
    <property type="project" value="RGD"/>
</dbReference>
<dbReference type="GO" id="GO:0010976">
    <property type="term" value="P:positive regulation of neuron projection development"/>
    <property type="evidence" value="ECO:0000250"/>
    <property type="project" value="UniProtKB"/>
</dbReference>
<dbReference type="GO" id="GO:0051092">
    <property type="term" value="P:positive regulation of NF-kappaB transcription factor activity"/>
    <property type="evidence" value="ECO:0000250"/>
    <property type="project" value="UniProtKB"/>
</dbReference>
<dbReference type="GO" id="GO:1900227">
    <property type="term" value="P:positive regulation of NLRP3 inflammasome complex assembly"/>
    <property type="evidence" value="ECO:0000250"/>
    <property type="project" value="UniProtKB"/>
</dbReference>
<dbReference type="GO" id="GO:0045669">
    <property type="term" value="P:positive regulation of osteoblast differentiation"/>
    <property type="evidence" value="ECO:0000250"/>
    <property type="project" value="UniProtKB"/>
</dbReference>
<dbReference type="GO" id="GO:0090277">
    <property type="term" value="P:positive regulation of peptide hormone secretion"/>
    <property type="evidence" value="ECO:0000315"/>
    <property type="project" value="RGD"/>
</dbReference>
<dbReference type="GO" id="GO:0051897">
    <property type="term" value="P:positive regulation of phosphatidylinositol 3-kinase/protein kinase B signal transduction"/>
    <property type="evidence" value="ECO:0000266"/>
    <property type="project" value="RGD"/>
</dbReference>
<dbReference type="GO" id="GO:0046827">
    <property type="term" value="P:positive regulation of protein export from nucleus"/>
    <property type="evidence" value="ECO:0000315"/>
    <property type="project" value="RGD"/>
</dbReference>
<dbReference type="GO" id="GO:0042307">
    <property type="term" value="P:positive regulation of protein import into nucleus"/>
    <property type="evidence" value="ECO:0000266"/>
    <property type="project" value="RGD"/>
</dbReference>
<dbReference type="GO" id="GO:0060298">
    <property type="term" value="P:positive regulation of sarcomere organization"/>
    <property type="evidence" value="ECO:0000315"/>
    <property type="project" value="RGD"/>
</dbReference>
<dbReference type="GO" id="GO:0045944">
    <property type="term" value="P:positive regulation of transcription by RNA polymerase II"/>
    <property type="evidence" value="ECO:0000266"/>
    <property type="project" value="RGD"/>
</dbReference>
<dbReference type="GO" id="GO:0046777">
    <property type="term" value="P:protein autophosphorylation"/>
    <property type="evidence" value="ECO:0000250"/>
    <property type="project" value="UniProtKB"/>
</dbReference>
<dbReference type="GO" id="GO:0010837">
    <property type="term" value="P:regulation of keratinocyte proliferation"/>
    <property type="evidence" value="ECO:0000250"/>
    <property type="project" value="UniProtKB"/>
</dbReference>
<dbReference type="GO" id="GO:0051279">
    <property type="term" value="P:regulation of release of sequestered calcium ion into cytosol"/>
    <property type="evidence" value="ECO:0000266"/>
    <property type="project" value="RGD"/>
</dbReference>
<dbReference type="GO" id="GO:0014723">
    <property type="term" value="P:regulation of skeletal muscle contraction by modulation of calcium ion sensitivity of myofibril"/>
    <property type="evidence" value="ECO:0000315"/>
    <property type="project" value="RGD"/>
</dbReference>
<dbReference type="GO" id="GO:0071873">
    <property type="term" value="P:response to norepinephrine"/>
    <property type="evidence" value="ECO:0000314"/>
    <property type="project" value="RGD"/>
</dbReference>
<dbReference type="GO" id="GO:0048010">
    <property type="term" value="P:vascular endothelial growth factor receptor signaling pathway"/>
    <property type="evidence" value="ECO:0000266"/>
    <property type="project" value="RGD"/>
</dbReference>
<dbReference type="CDD" id="cd20839">
    <property type="entry name" value="C1_PKD1_rpt1"/>
    <property type="match status" value="1"/>
</dbReference>
<dbReference type="CDD" id="cd20842">
    <property type="entry name" value="C1_PKD1_rpt2"/>
    <property type="match status" value="1"/>
</dbReference>
<dbReference type="CDD" id="cd01239">
    <property type="entry name" value="PH_PKD"/>
    <property type="match status" value="1"/>
</dbReference>
<dbReference type="CDD" id="cd14082">
    <property type="entry name" value="STKc_PKD"/>
    <property type="match status" value="1"/>
</dbReference>
<dbReference type="FunFam" id="1.10.510.10:FF:000151">
    <property type="entry name" value="Serine/threonine-protein kinase"/>
    <property type="match status" value="1"/>
</dbReference>
<dbReference type="FunFam" id="2.30.29.30:FF:000056">
    <property type="entry name" value="Serine/threonine-protein kinase"/>
    <property type="match status" value="1"/>
</dbReference>
<dbReference type="FunFam" id="3.30.200.20:FF:000137">
    <property type="entry name" value="Serine/threonine-protein kinase"/>
    <property type="match status" value="1"/>
</dbReference>
<dbReference type="FunFam" id="3.30.60.20:FF:000007">
    <property type="entry name" value="Serine/threonine-protein kinase"/>
    <property type="match status" value="1"/>
</dbReference>
<dbReference type="FunFam" id="3.30.60.20:FF:000019">
    <property type="entry name" value="Serine/threonine-protein kinase"/>
    <property type="match status" value="1"/>
</dbReference>
<dbReference type="Gene3D" id="3.30.60.20">
    <property type="match status" value="2"/>
</dbReference>
<dbReference type="Gene3D" id="2.30.29.30">
    <property type="entry name" value="Pleckstrin-homology domain (PH domain)/Phosphotyrosine-binding domain (PTB)"/>
    <property type="match status" value="1"/>
</dbReference>
<dbReference type="Gene3D" id="1.10.510.10">
    <property type="entry name" value="Transferase(Phosphotransferase) domain 1"/>
    <property type="match status" value="1"/>
</dbReference>
<dbReference type="InterPro" id="IPR046349">
    <property type="entry name" value="C1-like_sf"/>
</dbReference>
<dbReference type="InterPro" id="IPR020454">
    <property type="entry name" value="DAG/PE-bd"/>
</dbReference>
<dbReference type="InterPro" id="IPR011009">
    <property type="entry name" value="Kinase-like_dom_sf"/>
</dbReference>
<dbReference type="InterPro" id="IPR002219">
    <property type="entry name" value="PE/DAG-bd"/>
</dbReference>
<dbReference type="InterPro" id="IPR011993">
    <property type="entry name" value="PH-like_dom_sf"/>
</dbReference>
<dbReference type="InterPro" id="IPR001849">
    <property type="entry name" value="PH_domain"/>
</dbReference>
<dbReference type="InterPro" id="IPR000719">
    <property type="entry name" value="Prot_kinase_dom"/>
</dbReference>
<dbReference type="InterPro" id="IPR017441">
    <property type="entry name" value="Protein_kinase_ATP_BS"/>
</dbReference>
<dbReference type="InterPro" id="IPR015727">
    <property type="entry name" value="Protein_Kinase_C_mu-related"/>
</dbReference>
<dbReference type="InterPro" id="IPR008271">
    <property type="entry name" value="Ser/Thr_kinase_AS"/>
</dbReference>
<dbReference type="PANTHER" id="PTHR22968">
    <property type="entry name" value="PROTEIN KINASE C, MU"/>
    <property type="match status" value="1"/>
</dbReference>
<dbReference type="PANTHER" id="PTHR22968:SF9">
    <property type="entry name" value="SERINE_THREONINE-PROTEIN KINASE D1"/>
    <property type="match status" value="1"/>
</dbReference>
<dbReference type="Pfam" id="PF00130">
    <property type="entry name" value="C1_1"/>
    <property type="match status" value="2"/>
</dbReference>
<dbReference type="Pfam" id="PF00169">
    <property type="entry name" value="PH"/>
    <property type="match status" value="1"/>
</dbReference>
<dbReference type="Pfam" id="PF00069">
    <property type="entry name" value="Pkinase"/>
    <property type="match status" value="1"/>
</dbReference>
<dbReference type="PIRSF" id="PIRSF000552">
    <property type="entry name" value="PKC_mu_nu_D2"/>
    <property type="match status" value="1"/>
</dbReference>
<dbReference type="PRINTS" id="PR00008">
    <property type="entry name" value="DAGPEDOMAIN"/>
</dbReference>
<dbReference type="SMART" id="SM00109">
    <property type="entry name" value="C1"/>
    <property type="match status" value="2"/>
</dbReference>
<dbReference type="SMART" id="SM00233">
    <property type="entry name" value="PH"/>
    <property type="match status" value="1"/>
</dbReference>
<dbReference type="SMART" id="SM00220">
    <property type="entry name" value="S_TKc"/>
    <property type="match status" value="1"/>
</dbReference>
<dbReference type="SUPFAM" id="SSF57889">
    <property type="entry name" value="Cysteine-rich domain"/>
    <property type="match status" value="2"/>
</dbReference>
<dbReference type="SUPFAM" id="SSF50729">
    <property type="entry name" value="PH domain-like"/>
    <property type="match status" value="1"/>
</dbReference>
<dbReference type="SUPFAM" id="SSF56112">
    <property type="entry name" value="Protein kinase-like (PK-like)"/>
    <property type="match status" value="1"/>
</dbReference>
<dbReference type="PROSITE" id="PS50003">
    <property type="entry name" value="PH_DOMAIN"/>
    <property type="match status" value="1"/>
</dbReference>
<dbReference type="PROSITE" id="PS00107">
    <property type="entry name" value="PROTEIN_KINASE_ATP"/>
    <property type="match status" value="1"/>
</dbReference>
<dbReference type="PROSITE" id="PS50011">
    <property type="entry name" value="PROTEIN_KINASE_DOM"/>
    <property type="match status" value="1"/>
</dbReference>
<dbReference type="PROSITE" id="PS00108">
    <property type="entry name" value="PROTEIN_KINASE_ST"/>
    <property type="match status" value="1"/>
</dbReference>
<dbReference type="PROSITE" id="PS00479">
    <property type="entry name" value="ZF_DAG_PE_1"/>
    <property type="match status" value="2"/>
</dbReference>
<dbReference type="PROSITE" id="PS50081">
    <property type="entry name" value="ZF_DAG_PE_2"/>
    <property type="match status" value="2"/>
</dbReference>